<accession>Q5XDJ2</accession>
<proteinExistence type="inferred from homology"/>
<dbReference type="EC" id="2.7.7.23" evidence="1"/>
<dbReference type="EC" id="2.3.1.157" evidence="1"/>
<dbReference type="EMBL" id="CP000003">
    <property type="protein sequence ID" value="AAT86521.1"/>
    <property type="status" value="ALT_INIT"/>
    <property type="molecule type" value="Genomic_DNA"/>
</dbReference>
<dbReference type="RefSeq" id="WP_023078438.1">
    <property type="nucleotide sequence ID" value="NC_006086.1"/>
</dbReference>
<dbReference type="SMR" id="Q5XDJ2"/>
<dbReference type="KEGG" id="spa:M6_Spy0386"/>
<dbReference type="HOGENOM" id="CLU_029499_15_2_9"/>
<dbReference type="UniPathway" id="UPA00113">
    <property type="reaction ID" value="UER00532"/>
</dbReference>
<dbReference type="UniPathway" id="UPA00113">
    <property type="reaction ID" value="UER00533"/>
</dbReference>
<dbReference type="UniPathway" id="UPA00973"/>
<dbReference type="Proteomes" id="UP000001167">
    <property type="component" value="Chromosome"/>
</dbReference>
<dbReference type="GO" id="GO:0005737">
    <property type="term" value="C:cytoplasm"/>
    <property type="evidence" value="ECO:0007669"/>
    <property type="project" value="UniProtKB-SubCell"/>
</dbReference>
<dbReference type="GO" id="GO:0016020">
    <property type="term" value="C:membrane"/>
    <property type="evidence" value="ECO:0007669"/>
    <property type="project" value="GOC"/>
</dbReference>
<dbReference type="GO" id="GO:0019134">
    <property type="term" value="F:glucosamine-1-phosphate N-acetyltransferase activity"/>
    <property type="evidence" value="ECO:0007669"/>
    <property type="project" value="UniProtKB-UniRule"/>
</dbReference>
<dbReference type="GO" id="GO:0000287">
    <property type="term" value="F:magnesium ion binding"/>
    <property type="evidence" value="ECO:0007669"/>
    <property type="project" value="UniProtKB-UniRule"/>
</dbReference>
<dbReference type="GO" id="GO:0003977">
    <property type="term" value="F:UDP-N-acetylglucosamine diphosphorylase activity"/>
    <property type="evidence" value="ECO:0007669"/>
    <property type="project" value="UniProtKB-UniRule"/>
</dbReference>
<dbReference type="GO" id="GO:0000902">
    <property type="term" value="P:cell morphogenesis"/>
    <property type="evidence" value="ECO:0007669"/>
    <property type="project" value="UniProtKB-UniRule"/>
</dbReference>
<dbReference type="GO" id="GO:0071555">
    <property type="term" value="P:cell wall organization"/>
    <property type="evidence" value="ECO:0007669"/>
    <property type="project" value="UniProtKB-KW"/>
</dbReference>
<dbReference type="GO" id="GO:0009245">
    <property type="term" value="P:lipid A biosynthetic process"/>
    <property type="evidence" value="ECO:0007669"/>
    <property type="project" value="UniProtKB-UniRule"/>
</dbReference>
<dbReference type="GO" id="GO:0009252">
    <property type="term" value="P:peptidoglycan biosynthetic process"/>
    <property type="evidence" value="ECO:0007669"/>
    <property type="project" value="UniProtKB-UniRule"/>
</dbReference>
<dbReference type="GO" id="GO:0008360">
    <property type="term" value="P:regulation of cell shape"/>
    <property type="evidence" value="ECO:0007669"/>
    <property type="project" value="UniProtKB-KW"/>
</dbReference>
<dbReference type="GO" id="GO:0006048">
    <property type="term" value="P:UDP-N-acetylglucosamine biosynthetic process"/>
    <property type="evidence" value="ECO:0007669"/>
    <property type="project" value="UniProtKB-UniPathway"/>
</dbReference>
<dbReference type="CDD" id="cd02540">
    <property type="entry name" value="GT2_GlmU_N_bac"/>
    <property type="match status" value="1"/>
</dbReference>
<dbReference type="CDD" id="cd03353">
    <property type="entry name" value="LbH_GlmU_C"/>
    <property type="match status" value="1"/>
</dbReference>
<dbReference type="Gene3D" id="2.160.10.10">
    <property type="entry name" value="Hexapeptide repeat proteins"/>
    <property type="match status" value="1"/>
</dbReference>
<dbReference type="Gene3D" id="3.90.550.10">
    <property type="entry name" value="Spore Coat Polysaccharide Biosynthesis Protein SpsA, Chain A"/>
    <property type="match status" value="1"/>
</dbReference>
<dbReference type="HAMAP" id="MF_01631">
    <property type="entry name" value="GlmU"/>
    <property type="match status" value="1"/>
</dbReference>
<dbReference type="InterPro" id="IPR005882">
    <property type="entry name" value="Bifunctional_GlmU"/>
</dbReference>
<dbReference type="InterPro" id="IPR050065">
    <property type="entry name" value="GlmU-like"/>
</dbReference>
<dbReference type="InterPro" id="IPR038009">
    <property type="entry name" value="GlmU_C_LbH"/>
</dbReference>
<dbReference type="InterPro" id="IPR001451">
    <property type="entry name" value="Hexapep"/>
</dbReference>
<dbReference type="InterPro" id="IPR005835">
    <property type="entry name" value="NTP_transferase_dom"/>
</dbReference>
<dbReference type="InterPro" id="IPR029044">
    <property type="entry name" value="Nucleotide-diphossugar_trans"/>
</dbReference>
<dbReference type="InterPro" id="IPR011004">
    <property type="entry name" value="Trimer_LpxA-like_sf"/>
</dbReference>
<dbReference type="NCBIfam" id="TIGR01173">
    <property type="entry name" value="glmU"/>
    <property type="match status" value="1"/>
</dbReference>
<dbReference type="NCBIfam" id="NF010934">
    <property type="entry name" value="PRK14354.1"/>
    <property type="match status" value="1"/>
</dbReference>
<dbReference type="PANTHER" id="PTHR43584:SF3">
    <property type="entry name" value="BIFUNCTIONAL PROTEIN GLMU"/>
    <property type="match status" value="1"/>
</dbReference>
<dbReference type="PANTHER" id="PTHR43584">
    <property type="entry name" value="NUCLEOTIDYL TRANSFERASE"/>
    <property type="match status" value="1"/>
</dbReference>
<dbReference type="Pfam" id="PF00132">
    <property type="entry name" value="Hexapep"/>
    <property type="match status" value="1"/>
</dbReference>
<dbReference type="Pfam" id="PF00483">
    <property type="entry name" value="NTP_transferase"/>
    <property type="match status" value="1"/>
</dbReference>
<dbReference type="SUPFAM" id="SSF53448">
    <property type="entry name" value="Nucleotide-diphospho-sugar transferases"/>
    <property type="match status" value="1"/>
</dbReference>
<dbReference type="SUPFAM" id="SSF51161">
    <property type="entry name" value="Trimeric LpxA-like enzymes"/>
    <property type="match status" value="1"/>
</dbReference>
<evidence type="ECO:0000255" key="1">
    <source>
        <dbReference type="HAMAP-Rule" id="MF_01631"/>
    </source>
</evidence>
<evidence type="ECO:0000305" key="2"/>
<reference key="1">
    <citation type="journal article" date="2004" name="J. Infect. Dis.">
        <title>Progress toward characterization of the group A Streptococcus metagenome: complete genome sequence of a macrolide-resistant serotype M6 strain.</title>
        <authorList>
            <person name="Banks D.J."/>
            <person name="Porcella S.F."/>
            <person name="Barbian K.D."/>
            <person name="Beres S.B."/>
            <person name="Philips L.E."/>
            <person name="Voyich J.M."/>
            <person name="DeLeo F.R."/>
            <person name="Martin J.M."/>
            <person name="Somerville G.A."/>
            <person name="Musser J.M."/>
        </authorList>
    </citation>
    <scope>NUCLEOTIDE SEQUENCE [LARGE SCALE GENOMIC DNA]</scope>
    <source>
        <strain>ATCC BAA-946 / MGAS10394</strain>
    </source>
</reference>
<name>GLMU_STRP6</name>
<keyword id="KW-0012">Acyltransferase</keyword>
<keyword id="KW-0133">Cell shape</keyword>
<keyword id="KW-0961">Cell wall biogenesis/degradation</keyword>
<keyword id="KW-0963">Cytoplasm</keyword>
<keyword id="KW-0460">Magnesium</keyword>
<keyword id="KW-0479">Metal-binding</keyword>
<keyword id="KW-0511">Multifunctional enzyme</keyword>
<keyword id="KW-0548">Nucleotidyltransferase</keyword>
<keyword id="KW-0573">Peptidoglycan synthesis</keyword>
<keyword id="KW-0677">Repeat</keyword>
<keyword id="KW-0808">Transferase</keyword>
<sequence>MTNYAIILAAGKGTRMTSDLPKVLHKVSGLTMLEHVFRSVKAISPEKAVTVIGHKSEMVRAVLADQSAFVHQTEQLGTGHAVMMAETQLEGLEGHTLVIAGDTPLITGESLKSLIDFHVNHKNVATILTATAQDPFGYGRIVRNKDGEVIKIVEQKDANEYEQQLKEINTGTYVFDNKRLFEALKCITTNNAQGEYYLTDVVAIFRANKEKVGAYILRDFNESLGVNDRVALATAETVMRQRITQKHMVNGVTFQNPETVYIESDVTIAPDVLIEGNVTLKGRTHIGSGTVLTNGTYIVDSEIGDNCVVTNSMIESSVLAAGVTVGPYAHLRPGTTLDREVHIGNFVEVKGSHIGEKTKAGHLTYIGNAQVGSSVNVGAGTITVNYDGQNKYETVIGDHAFIGSNSTLIAPLEIGDHALTAAGSTISKTVPIDSIAIGRSRQVTKEGYAKRLAHHPSRSK</sequence>
<feature type="chain" id="PRO_0000233856" description="Bifunctional protein GlmU">
    <location>
        <begin position="1"/>
        <end position="460"/>
    </location>
</feature>
<feature type="region of interest" description="Pyrophosphorylase" evidence="1">
    <location>
        <begin position="1"/>
        <end position="229"/>
    </location>
</feature>
<feature type="region of interest" description="Linker" evidence="1">
    <location>
        <begin position="230"/>
        <end position="250"/>
    </location>
</feature>
<feature type="region of interest" description="N-acetyltransferase" evidence="1">
    <location>
        <begin position="251"/>
        <end position="460"/>
    </location>
</feature>
<feature type="active site" description="Proton acceptor" evidence="1">
    <location>
        <position position="362"/>
    </location>
</feature>
<feature type="binding site" evidence="1">
    <location>
        <begin position="8"/>
        <end position="11"/>
    </location>
    <ligand>
        <name>UDP-N-acetyl-alpha-D-glucosamine</name>
        <dbReference type="ChEBI" id="CHEBI:57705"/>
    </ligand>
</feature>
<feature type="binding site" evidence="1">
    <location>
        <position position="22"/>
    </location>
    <ligand>
        <name>UDP-N-acetyl-alpha-D-glucosamine</name>
        <dbReference type="ChEBI" id="CHEBI:57705"/>
    </ligand>
</feature>
<feature type="binding site" evidence="1">
    <location>
        <position position="72"/>
    </location>
    <ligand>
        <name>UDP-N-acetyl-alpha-D-glucosamine</name>
        <dbReference type="ChEBI" id="CHEBI:57705"/>
    </ligand>
</feature>
<feature type="binding site" evidence="1">
    <location>
        <begin position="77"/>
        <end position="78"/>
    </location>
    <ligand>
        <name>UDP-N-acetyl-alpha-D-glucosamine</name>
        <dbReference type="ChEBI" id="CHEBI:57705"/>
    </ligand>
</feature>
<feature type="binding site" evidence="1">
    <location>
        <position position="102"/>
    </location>
    <ligand>
        <name>Mg(2+)</name>
        <dbReference type="ChEBI" id="CHEBI:18420"/>
    </ligand>
</feature>
<feature type="binding site" evidence="1">
    <location>
        <position position="139"/>
    </location>
    <ligand>
        <name>UDP-N-acetyl-alpha-D-glucosamine</name>
        <dbReference type="ChEBI" id="CHEBI:57705"/>
    </ligand>
</feature>
<feature type="binding site" evidence="1">
    <location>
        <position position="154"/>
    </location>
    <ligand>
        <name>UDP-N-acetyl-alpha-D-glucosamine</name>
        <dbReference type="ChEBI" id="CHEBI:57705"/>
    </ligand>
</feature>
<feature type="binding site" evidence="1">
    <location>
        <position position="169"/>
    </location>
    <ligand>
        <name>UDP-N-acetyl-alpha-D-glucosamine</name>
        <dbReference type="ChEBI" id="CHEBI:57705"/>
    </ligand>
</feature>
<feature type="binding site" evidence="1">
    <location>
        <position position="227"/>
    </location>
    <ligand>
        <name>Mg(2+)</name>
        <dbReference type="ChEBI" id="CHEBI:18420"/>
    </ligand>
</feature>
<feature type="binding site" evidence="1">
    <location>
        <position position="227"/>
    </location>
    <ligand>
        <name>UDP-N-acetyl-alpha-D-glucosamine</name>
        <dbReference type="ChEBI" id="CHEBI:57705"/>
    </ligand>
</feature>
<feature type="binding site" evidence="1">
    <location>
        <position position="332"/>
    </location>
    <ligand>
        <name>UDP-N-acetyl-alpha-D-glucosamine</name>
        <dbReference type="ChEBI" id="CHEBI:57705"/>
    </ligand>
</feature>
<feature type="binding site" evidence="1">
    <location>
        <position position="350"/>
    </location>
    <ligand>
        <name>UDP-N-acetyl-alpha-D-glucosamine</name>
        <dbReference type="ChEBI" id="CHEBI:57705"/>
    </ligand>
</feature>
<feature type="binding site" evidence="1">
    <location>
        <position position="365"/>
    </location>
    <ligand>
        <name>UDP-N-acetyl-alpha-D-glucosamine</name>
        <dbReference type="ChEBI" id="CHEBI:57705"/>
    </ligand>
</feature>
<feature type="binding site" evidence="1">
    <location>
        <position position="376"/>
    </location>
    <ligand>
        <name>UDP-N-acetyl-alpha-D-glucosamine</name>
        <dbReference type="ChEBI" id="CHEBI:57705"/>
    </ligand>
</feature>
<feature type="binding site" evidence="1">
    <location>
        <position position="379"/>
    </location>
    <ligand>
        <name>acetyl-CoA</name>
        <dbReference type="ChEBI" id="CHEBI:57288"/>
    </ligand>
</feature>
<feature type="binding site" evidence="1">
    <location>
        <begin position="385"/>
        <end position="386"/>
    </location>
    <ligand>
        <name>acetyl-CoA</name>
        <dbReference type="ChEBI" id="CHEBI:57288"/>
    </ligand>
</feature>
<feature type="binding site" evidence="1">
    <location>
        <position position="404"/>
    </location>
    <ligand>
        <name>acetyl-CoA</name>
        <dbReference type="ChEBI" id="CHEBI:57288"/>
    </ligand>
</feature>
<feature type="binding site" evidence="1">
    <location>
        <position position="422"/>
    </location>
    <ligand>
        <name>acetyl-CoA</name>
        <dbReference type="ChEBI" id="CHEBI:57288"/>
    </ligand>
</feature>
<feature type="binding site" evidence="1">
    <location>
        <position position="439"/>
    </location>
    <ligand>
        <name>acetyl-CoA</name>
        <dbReference type="ChEBI" id="CHEBI:57288"/>
    </ligand>
</feature>
<protein>
    <recommendedName>
        <fullName evidence="1">Bifunctional protein GlmU</fullName>
    </recommendedName>
    <domain>
        <recommendedName>
            <fullName evidence="1">UDP-N-acetylglucosamine pyrophosphorylase</fullName>
            <ecNumber evidence="1">2.7.7.23</ecNumber>
        </recommendedName>
        <alternativeName>
            <fullName evidence="1">N-acetylglucosamine-1-phosphate uridyltransferase</fullName>
        </alternativeName>
    </domain>
    <domain>
        <recommendedName>
            <fullName evidence="1">Glucosamine-1-phosphate N-acetyltransferase</fullName>
            <ecNumber evidence="1">2.3.1.157</ecNumber>
        </recommendedName>
    </domain>
</protein>
<gene>
    <name evidence="1" type="primary">glmU</name>
    <name type="ordered locus">M6_Spy0386</name>
</gene>
<comment type="function">
    <text evidence="1">Catalyzes the last two sequential reactions in the de novo biosynthetic pathway for UDP-N-acetylglucosamine (UDP-GlcNAc). The C-terminal domain catalyzes the transfer of acetyl group from acetyl coenzyme A to glucosamine-1-phosphate (GlcN-1-P) to produce N-acetylglucosamine-1-phosphate (GlcNAc-1-P), which is converted into UDP-GlcNAc by the transfer of uridine 5-monophosphate (from uridine 5-triphosphate), a reaction catalyzed by the N-terminal domain.</text>
</comment>
<comment type="catalytic activity">
    <reaction evidence="1">
        <text>alpha-D-glucosamine 1-phosphate + acetyl-CoA = N-acetyl-alpha-D-glucosamine 1-phosphate + CoA + H(+)</text>
        <dbReference type="Rhea" id="RHEA:13725"/>
        <dbReference type="ChEBI" id="CHEBI:15378"/>
        <dbReference type="ChEBI" id="CHEBI:57287"/>
        <dbReference type="ChEBI" id="CHEBI:57288"/>
        <dbReference type="ChEBI" id="CHEBI:57776"/>
        <dbReference type="ChEBI" id="CHEBI:58516"/>
        <dbReference type="EC" id="2.3.1.157"/>
    </reaction>
</comment>
<comment type="catalytic activity">
    <reaction evidence="1">
        <text>N-acetyl-alpha-D-glucosamine 1-phosphate + UTP + H(+) = UDP-N-acetyl-alpha-D-glucosamine + diphosphate</text>
        <dbReference type="Rhea" id="RHEA:13509"/>
        <dbReference type="ChEBI" id="CHEBI:15378"/>
        <dbReference type="ChEBI" id="CHEBI:33019"/>
        <dbReference type="ChEBI" id="CHEBI:46398"/>
        <dbReference type="ChEBI" id="CHEBI:57705"/>
        <dbReference type="ChEBI" id="CHEBI:57776"/>
        <dbReference type="EC" id="2.7.7.23"/>
    </reaction>
</comment>
<comment type="cofactor">
    <cofactor evidence="1">
        <name>Mg(2+)</name>
        <dbReference type="ChEBI" id="CHEBI:18420"/>
    </cofactor>
    <text evidence="1">Binds 1 Mg(2+) ion per subunit.</text>
</comment>
<comment type="pathway">
    <text evidence="1">Nucleotide-sugar biosynthesis; UDP-N-acetyl-alpha-D-glucosamine biosynthesis; N-acetyl-alpha-D-glucosamine 1-phosphate from alpha-D-glucosamine 6-phosphate (route II): step 2/2.</text>
</comment>
<comment type="pathway">
    <text evidence="1">Nucleotide-sugar biosynthesis; UDP-N-acetyl-alpha-D-glucosamine biosynthesis; UDP-N-acetyl-alpha-D-glucosamine from N-acetyl-alpha-D-glucosamine 1-phosphate: step 1/1.</text>
</comment>
<comment type="pathway">
    <text evidence="1">Bacterial outer membrane biogenesis; LPS lipid A biosynthesis.</text>
</comment>
<comment type="subunit">
    <text evidence="1">Homotrimer.</text>
</comment>
<comment type="subcellular location">
    <subcellularLocation>
        <location evidence="1">Cytoplasm</location>
    </subcellularLocation>
</comment>
<comment type="similarity">
    <text evidence="1">In the N-terminal section; belongs to the N-acetylglucosamine-1-phosphate uridyltransferase family.</text>
</comment>
<comment type="similarity">
    <text evidence="1">In the C-terminal section; belongs to the transferase hexapeptide repeat family.</text>
</comment>
<comment type="sequence caution" evidence="2">
    <conflict type="erroneous initiation">
        <sequence resource="EMBL-CDS" id="AAT86521"/>
    </conflict>
</comment>
<organism>
    <name type="scientific">Streptococcus pyogenes serotype M6 (strain ATCC BAA-946 / MGAS10394)</name>
    <dbReference type="NCBI Taxonomy" id="286636"/>
    <lineage>
        <taxon>Bacteria</taxon>
        <taxon>Bacillati</taxon>
        <taxon>Bacillota</taxon>
        <taxon>Bacilli</taxon>
        <taxon>Lactobacillales</taxon>
        <taxon>Streptococcaceae</taxon>
        <taxon>Streptococcus</taxon>
    </lineage>
</organism>